<gene>
    <name type="primary">imp4</name>
    <name type="ORF">SPAC19A8.07c</name>
</gene>
<accession>O13823</accession>
<sequence>MLRRAVRERRQFIYKRNQELQEAKLNEKRRALRKALEGNKELNKDLQEDSQLQKDYKYDESRATQEETETNLDDEYHRLGEREPKVLVTTSREPSSRLAQFAKEVRLLIPNSYRLNRGNIVVGSLVEAARANDITDIVILHEHRGIPDGLVISHLPYGPTLSFSLHNVVLRHDIPNTGTMSEAYPHLIFENLTSKLGKRVKTALSALFPPDPKDTTPRVVTFANTDDYISFRHHIYAKTGPKQIILSEAGPRFEMKLFEITLGTVDMVDADVEWKLKPYQRHKRDVLAE</sequence>
<feature type="chain" id="PRO_0000120243" description="U3 small nucleolar ribonucleoprotein protein imp4">
    <location>
        <begin position="1"/>
        <end position="289"/>
    </location>
</feature>
<feature type="domain" description="Brix" evidence="2">
    <location>
        <begin position="84"/>
        <end position="266"/>
    </location>
</feature>
<feature type="region of interest" description="Disordered" evidence="3">
    <location>
        <begin position="42"/>
        <end position="82"/>
    </location>
</feature>
<feature type="compositionally biased region" description="Basic and acidic residues" evidence="3">
    <location>
        <begin position="42"/>
        <end position="65"/>
    </location>
</feature>
<comment type="function">
    <text evidence="1">Component of the U3 small nucleolar ribonucleoprotein. Required for the early cleavages at sites A0, A1 and A2 during 18S ribosomal pre-RNA processing (By similarity).</text>
</comment>
<comment type="subunit">
    <text evidence="1">Component of a heterotrimeric complex containing imp3, imp4 and mpp10.</text>
</comment>
<comment type="subcellular location">
    <subcellularLocation>
        <location evidence="1">Nucleus</location>
        <location evidence="1">Nucleolus</location>
    </subcellularLocation>
</comment>
<reference key="1">
    <citation type="journal article" date="2002" name="Nature">
        <title>The genome sequence of Schizosaccharomyces pombe.</title>
        <authorList>
            <person name="Wood V."/>
            <person name="Gwilliam R."/>
            <person name="Rajandream M.A."/>
            <person name="Lyne M.H."/>
            <person name="Lyne R."/>
            <person name="Stewart A."/>
            <person name="Sgouros J.G."/>
            <person name="Peat N."/>
            <person name="Hayles J."/>
            <person name="Baker S.G."/>
            <person name="Basham D."/>
            <person name="Bowman S."/>
            <person name="Brooks K."/>
            <person name="Brown D."/>
            <person name="Brown S."/>
            <person name="Chillingworth T."/>
            <person name="Churcher C.M."/>
            <person name="Collins M."/>
            <person name="Connor R."/>
            <person name="Cronin A."/>
            <person name="Davis P."/>
            <person name="Feltwell T."/>
            <person name="Fraser A."/>
            <person name="Gentles S."/>
            <person name="Goble A."/>
            <person name="Hamlin N."/>
            <person name="Harris D.E."/>
            <person name="Hidalgo J."/>
            <person name="Hodgson G."/>
            <person name="Holroyd S."/>
            <person name="Hornsby T."/>
            <person name="Howarth S."/>
            <person name="Huckle E.J."/>
            <person name="Hunt S."/>
            <person name="Jagels K."/>
            <person name="James K.D."/>
            <person name="Jones L."/>
            <person name="Jones M."/>
            <person name="Leather S."/>
            <person name="McDonald S."/>
            <person name="McLean J."/>
            <person name="Mooney P."/>
            <person name="Moule S."/>
            <person name="Mungall K.L."/>
            <person name="Murphy L.D."/>
            <person name="Niblett D."/>
            <person name="Odell C."/>
            <person name="Oliver K."/>
            <person name="O'Neil S."/>
            <person name="Pearson D."/>
            <person name="Quail M.A."/>
            <person name="Rabbinowitsch E."/>
            <person name="Rutherford K.M."/>
            <person name="Rutter S."/>
            <person name="Saunders D."/>
            <person name="Seeger K."/>
            <person name="Sharp S."/>
            <person name="Skelton J."/>
            <person name="Simmonds M.N."/>
            <person name="Squares R."/>
            <person name="Squares S."/>
            <person name="Stevens K."/>
            <person name="Taylor K."/>
            <person name="Taylor R.G."/>
            <person name="Tivey A."/>
            <person name="Walsh S.V."/>
            <person name="Warren T."/>
            <person name="Whitehead S."/>
            <person name="Woodward J.R."/>
            <person name="Volckaert G."/>
            <person name="Aert R."/>
            <person name="Robben J."/>
            <person name="Grymonprez B."/>
            <person name="Weltjens I."/>
            <person name="Vanstreels E."/>
            <person name="Rieger M."/>
            <person name="Schaefer M."/>
            <person name="Mueller-Auer S."/>
            <person name="Gabel C."/>
            <person name="Fuchs M."/>
            <person name="Duesterhoeft A."/>
            <person name="Fritzc C."/>
            <person name="Holzer E."/>
            <person name="Moestl D."/>
            <person name="Hilbert H."/>
            <person name="Borzym K."/>
            <person name="Langer I."/>
            <person name="Beck A."/>
            <person name="Lehrach H."/>
            <person name="Reinhardt R."/>
            <person name="Pohl T.M."/>
            <person name="Eger P."/>
            <person name="Zimmermann W."/>
            <person name="Wedler H."/>
            <person name="Wambutt R."/>
            <person name="Purnelle B."/>
            <person name="Goffeau A."/>
            <person name="Cadieu E."/>
            <person name="Dreano S."/>
            <person name="Gloux S."/>
            <person name="Lelaure V."/>
            <person name="Mottier S."/>
            <person name="Galibert F."/>
            <person name="Aves S.J."/>
            <person name="Xiang Z."/>
            <person name="Hunt C."/>
            <person name="Moore K."/>
            <person name="Hurst S.M."/>
            <person name="Lucas M."/>
            <person name="Rochet M."/>
            <person name="Gaillardin C."/>
            <person name="Tallada V.A."/>
            <person name="Garzon A."/>
            <person name="Thode G."/>
            <person name="Daga R.R."/>
            <person name="Cruzado L."/>
            <person name="Jimenez J."/>
            <person name="Sanchez M."/>
            <person name="del Rey F."/>
            <person name="Benito J."/>
            <person name="Dominguez A."/>
            <person name="Revuelta J.L."/>
            <person name="Moreno S."/>
            <person name="Armstrong J."/>
            <person name="Forsburg S.L."/>
            <person name="Cerutti L."/>
            <person name="Lowe T."/>
            <person name="McCombie W.R."/>
            <person name="Paulsen I."/>
            <person name="Potashkin J."/>
            <person name="Shpakovski G.V."/>
            <person name="Ussery D."/>
            <person name="Barrell B.G."/>
            <person name="Nurse P."/>
        </authorList>
    </citation>
    <scope>NUCLEOTIDE SEQUENCE [LARGE SCALE GENOMIC DNA]</scope>
    <source>
        <strain>972 / ATCC 24843</strain>
    </source>
</reference>
<proteinExistence type="inferred from homology"/>
<keyword id="KW-0539">Nucleus</keyword>
<keyword id="KW-1185">Reference proteome</keyword>
<keyword id="KW-0687">Ribonucleoprotein</keyword>
<keyword id="KW-0690">Ribosome biogenesis</keyword>
<keyword id="KW-0698">rRNA processing</keyword>
<organism>
    <name type="scientific">Schizosaccharomyces pombe (strain 972 / ATCC 24843)</name>
    <name type="common">Fission yeast</name>
    <dbReference type="NCBI Taxonomy" id="284812"/>
    <lineage>
        <taxon>Eukaryota</taxon>
        <taxon>Fungi</taxon>
        <taxon>Dikarya</taxon>
        <taxon>Ascomycota</taxon>
        <taxon>Taphrinomycotina</taxon>
        <taxon>Schizosaccharomycetes</taxon>
        <taxon>Schizosaccharomycetales</taxon>
        <taxon>Schizosaccharomycetaceae</taxon>
        <taxon>Schizosaccharomyces</taxon>
    </lineage>
</organism>
<evidence type="ECO:0000250" key="1"/>
<evidence type="ECO:0000255" key="2">
    <source>
        <dbReference type="PROSITE-ProRule" id="PRU00034"/>
    </source>
</evidence>
<evidence type="ECO:0000256" key="3">
    <source>
        <dbReference type="SAM" id="MobiDB-lite"/>
    </source>
</evidence>
<name>IMP4_SCHPO</name>
<protein>
    <recommendedName>
        <fullName>U3 small nucleolar ribonucleoprotein protein imp4</fullName>
        <shortName>U3 snoRNP protein imp4</shortName>
    </recommendedName>
</protein>
<dbReference type="EMBL" id="CU329670">
    <property type="protein sequence ID" value="CAB11643.1"/>
    <property type="molecule type" value="Genomic_DNA"/>
</dbReference>
<dbReference type="PIR" id="T37954">
    <property type="entry name" value="T37954"/>
</dbReference>
<dbReference type="RefSeq" id="NP_593785.1">
    <property type="nucleotide sequence ID" value="NM_001019214.2"/>
</dbReference>
<dbReference type="SMR" id="O13823"/>
<dbReference type="BioGRID" id="278907">
    <property type="interactions" value="4"/>
</dbReference>
<dbReference type="FunCoup" id="O13823">
    <property type="interactions" value="695"/>
</dbReference>
<dbReference type="IntAct" id="O13823">
    <property type="interactions" value="1"/>
</dbReference>
<dbReference type="STRING" id="284812.O13823"/>
<dbReference type="iPTMnet" id="O13823"/>
<dbReference type="PaxDb" id="4896-SPAC19A8.07c.1"/>
<dbReference type="EnsemblFungi" id="SPAC19A8.07c.1">
    <property type="protein sequence ID" value="SPAC19A8.07c.1:pep"/>
    <property type="gene ID" value="SPAC19A8.07c"/>
</dbReference>
<dbReference type="GeneID" id="2542446"/>
<dbReference type="KEGG" id="spo:2542446"/>
<dbReference type="PomBase" id="SPAC19A8.07c">
    <property type="gene designation" value="imp4"/>
</dbReference>
<dbReference type="VEuPathDB" id="FungiDB:SPAC19A8.07c"/>
<dbReference type="eggNOG" id="KOG2781">
    <property type="taxonomic scope" value="Eukaryota"/>
</dbReference>
<dbReference type="HOGENOM" id="CLU_040063_2_0_1"/>
<dbReference type="InParanoid" id="O13823"/>
<dbReference type="OMA" id="IGTMSEQ"/>
<dbReference type="PhylomeDB" id="O13823"/>
<dbReference type="Reactome" id="R-SPO-6791226">
    <property type="pathway name" value="Major pathway of rRNA processing in the nucleolus and cytosol"/>
</dbReference>
<dbReference type="PRO" id="PR:O13823"/>
<dbReference type="Proteomes" id="UP000002485">
    <property type="component" value="Chromosome I"/>
</dbReference>
<dbReference type="GO" id="GO:0034457">
    <property type="term" value="C:Mpp10 complex"/>
    <property type="evidence" value="ECO:0000318"/>
    <property type="project" value="GO_Central"/>
</dbReference>
<dbReference type="GO" id="GO:0005730">
    <property type="term" value="C:nucleolus"/>
    <property type="evidence" value="ECO:0007005"/>
    <property type="project" value="PomBase"/>
</dbReference>
<dbReference type="GO" id="GO:0005634">
    <property type="term" value="C:nucleus"/>
    <property type="evidence" value="ECO:0007005"/>
    <property type="project" value="PomBase"/>
</dbReference>
<dbReference type="GO" id="GO:0032040">
    <property type="term" value="C:small-subunit processome"/>
    <property type="evidence" value="ECO:0000318"/>
    <property type="project" value="GO_Central"/>
</dbReference>
<dbReference type="GO" id="GO:0042134">
    <property type="term" value="F:rRNA primary transcript binding"/>
    <property type="evidence" value="ECO:0007669"/>
    <property type="project" value="InterPro"/>
</dbReference>
<dbReference type="GO" id="GO:0030515">
    <property type="term" value="F:snoRNA binding"/>
    <property type="evidence" value="ECO:0000318"/>
    <property type="project" value="GO_Central"/>
</dbReference>
<dbReference type="GO" id="GO:0042274">
    <property type="term" value="P:ribosomal small subunit biogenesis"/>
    <property type="evidence" value="ECO:0000266"/>
    <property type="project" value="PomBase"/>
</dbReference>
<dbReference type="GO" id="GO:0006364">
    <property type="term" value="P:rRNA processing"/>
    <property type="evidence" value="ECO:0000318"/>
    <property type="project" value="GO_Central"/>
</dbReference>
<dbReference type="FunFam" id="3.40.50.10480:FF:000001">
    <property type="entry name" value="IMP4, U3 small nucleolar ribonucleoprotein"/>
    <property type="match status" value="1"/>
</dbReference>
<dbReference type="Gene3D" id="3.40.50.10480">
    <property type="entry name" value="Probable brix-domain ribosomal biogenesis protein"/>
    <property type="match status" value="1"/>
</dbReference>
<dbReference type="InterPro" id="IPR007109">
    <property type="entry name" value="Brix"/>
</dbReference>
<dbReference type="InterPro" id="IPR044281">
    <property type="entry name" value="IMP4/RPF1"/>
</dbReference>
<dbReference type="PANTHER" id="PTHR22734">
    <property type="entry name" value="U3 SMALL NUCLEOLAR RIBONUCLEOPROTEIN PROTEIN IMP4"/>
    <property type="match status" value="1"/>
</dbReference>
<dbReference type="PANTHER" id="PTHR22734:SF2">
    <property type="entry name" value="U3 SMALL NUCLEOLAR RIBONUCLEOPROTEIN PROTEIN IMP4"/>
    <property type="match status" value="1"/>
</dbReference>
<dbReference type="Pfam" id="PF04427">
    <property type="entry name" value="Brix"/>
    <property type="match status" value="1"/>
</dbReference>
<dbReference type="SMART" id="SM00879">
    <property type="entry name" value="Brix"/>
    <property type="match status" value="1"/>
</dbReference>
<dbReference type="SUPFAM" id="SSF52954">
    <property type="entry name" value="Class II aaRS ABD-related"/>
    <property type="match status" value="1"/>
</dbReference>
<dbReference type="PROSITE" id="PS50833">
    <property type="entry name" value="BRIX"/>
    <property type="match status" value="1"/>
</dbReference>